<keyword id="KW-0687">Ribonucleoprotein</keyword>
<keyword id="KW-0689">Ribosomal protein</keyword>
<keyword id="KW-0694">RNA-binding</keyword>
<keyword id="KW-0699">rRNA-binding</keyword>
<proteinExistence type="inferred from homology"/>
<organism>
    <name type="scientific">Streptococcus pyogenes serotype M49 (strain NZ131)</name>
    <dbReference type="NCBI Taxonomy" id="471876"/>
    <lineage>
        <taxon>Bacteria</taxon>
        <taxon>Bacillati</taxon>
        <taxon>Bacillota</taxon>
        <taxon>Bacilli</taxon>
        <taxon>Lactobacillales</taxon>
        <taxon>Streptococcaceae</taxon>
        <taxon>Streptococcus</taxon>
    </lineage>
</organism>
<gene>
    <name evidence="1" type="primary">rplN</name>
    <name type="ordered locus">Spy49_0057</name>
</gene>
<comment type="function">
    <text evidence="1">Binds to 23S rRNA. Forms part of two intersubunit bridges in the 70S ribosome.</text>
</comment>
<comment type="subunit">
    <text evidence="1">Part of the 50S ribosomal subunit. Forms a cluster with proteins L3 and L19. In the 70S ribosome, L14 and L19 interact and together make contacts with the 16S rRNA in bridges B5 and B8.</text>
</comment>
<comment type="similarity">
    <text evidence="1">Belongs to the universal ribosomal protein uL14 family.</text>
</comment>
<feature type="chain" id="PRO_1000144339" description="Large ribosomal subunit protein uL14">
    <location>
        <begin position="1"/>
        <end position="122"/>
    </location>
</feature>
<reference key="1">
    <citation type="journal article" date="2008" name="J. Bacteriol.">
        <title>Genome sequence of a nephritogenic and highly transformable M49 strain of Streptococcus pyogenes.</title>
        <authorList>
            <person name="McShan W.M."/>
            <person name="Ferretti J.J."/>
            <person name="Karasawa T."/>
            <person name="Suvorov A.N."/>
            <person name="Lin S."/>
            <person name="Qin B."/>
            <person name="Jia H."/>
            <person name="Kenton S."/>
            <person name="Najar F."/>
            <person name="Wu H."/>
            <person name="Scott J."/>
            <person name="Roe B.A."/>
            <person name="Savic D.J."/>
        </authorList>
    </citation>
    <scope>NUCLEOTIDE SEQUENCE [LARGE SCALE GENOMIC DNA]</scope>
    <source>
        <strain>NZ131</strain>
    </source>
</reference>
<dbReference type="EMBL" id="CP000829">
    <property type="protein sequence ID" value="ACI60414.1"/>
    <property type="molecule type" value="Genomic_DNA"/>
</dbReference>
<dbReference type="SMR" id="B5XJ46"/>
<dbReference type="KEGG" id="soz:Spy49_0057"/>
<dbReference type="HOGENOM" id="CLU_095071_2_1_9"/>
<dbReference type="Proteomes" id="UP000001039">
    <property type="component" value="Chromosome"/>
</dbReference>
<dbReference type="GO" id="GO:0022625">
    <property type="term" value="C:cytosolic large ribosomal subunit"/>
    <property type="evidence" value="ECO:0007669"/>
    <property type="project" value="TreeGrafter"/>
</dbReference>
<dbReference type="GO" id="GO:0070180">
    <property type="term" value="F:large ribosomal subunit rRNA binding"/>
    <property type="evidence" value="ECO:0007669"/>
    <property type="project" value="TreeGrafter"/>
</dbReference>
<dbReference type="GO" id="GO:0003735">
    <property type="term" value="F:structural constituent of ribosome"/>
    <property type="evidence" value="ECO:0007669"/>
    <property type="project" value="InterPro"/>
</dbReference>
<dbReference type="GO" id="GO:0006412">
    <property type="term" value="P:translation"/>
    <property type="evidence" value="ECO:0007669"/>
    <property type="project" value="UniProtKB-UniRule"/>
</dbReference>
<dbReference type="CDD" id="cd00337">
    <property type="entry name" value="Ribosomal_uL14"/>
    <property type="match status" value="1"/>
</dbReference>
<dbReference type="FunFam" id="2.40.150.20:FF:000001">
    <property type="entry name" value="50S ribosomal protein L14"/>
    <property type="match status" value="1"/>
</dbReference>
<dbReference type="Gene3D" id="2.40.150.20">
    <property type="entry name" value="Ribosomal protein L14"/>
    <property type="match status" value="1"/>
</dbReference>
<dbReference type="HAMAP" id="MF_01367">
    <property type="entry name" value="Ribosomal_uL14"/>
    <property type="match status" value="1"/>
</dbReference>
<dbReference type="InterPro" id="IPR000218">
    <property type="entry name" value="Ribosomal_uL14"/>
</dbReference>
<dbReference type="InterPro" id="IPR005745">
    <property type="entry name" value="Ribosomal_uL14_bac-type"/>
</dbReference>
<dbReference type="InterPro" id="IPR019972">
    <property type="entry name" value="Ribosomal_uL14_CS"/>
</dbReference>
<dbReference type="InterPro" id="IPR036853">
    <property type="entry name" value="Ribosomal_uL14_sf"/>
</dbReference>
<dbReference type="NCBIfam" id="TIGR01067">
    <property type="entry name" value="rplN_bact"/>
    <property type="match status" value="1"/>
</dbReference>
<dbReference type="PANTHER" id="PTHR11761">
    <property type="entry name" value="50S/60S RIBOSOMAL PROTEIN L14/L23"/>
    <property type="match status" value="1"/>
</dbReference>
<dbReference type="PANTHER" id="PTHR11761:SF3">
    <property type="entry name" value="LARGE RIBOSOMAL SUBUNIT PROTEIN UL14M"/>
    <property type="match status" value="1"/>
</dbReference>
<dbReference type="Pfam" id="PF00238">
    <property type="entry name" value="Ribosomal_L14"/>
    <property type="match status" value="1"/>
</dbReference>
<dbReference type="SMART" id="SM01374">
    <property type="entry name" value="Ribosomal_L14"/>
    <property type="match status" value="1"/>
</dbReference>
<dbReference type="SUPFAM" id="SSF50193">
    <property type="entry name" value="Ribosomal protein L14"/>
    <property type="match status" value="1"/>
</dbReference>
<dbReference type="PROSITE" id="PS00049">
    <property type="entry name" value="RIBOSOMAL_L14"/>
    <property type="match status" value="1"/>
</dbReference>
<sequence length="122" mass="13061">MIQQETRLKVADNSGAREILTIKVLGGSGRKFANIGDVIVASVKQATPGGAVKKGDVVKAVIVRTKTGARRPDGSYIKFDDNAAVIIRDDKTPRGTRIFGPVARELREGGYMKIVSLAPEVL</sequence>
<accession>B5XJ46</accession>
<name>RL14_STRPZ</name>
<protein>
    <recommendedName>
        <fullName evidence="1">Large ribosomal subunit protein uL14</fullName>
    </recommendedName>
    <alternativeName>
        <fullName evidence="2">50S ribosomal protein L14</fullName>
    </alternativeName>
</protein>
<evidence type="ECO:0000255" key="1">
    <source>
        <dbReference type="HAMAP-Rule" id="MF_01367"/>
    </source>
</evidence>
<evidence type="ECO:0000305" key="2"/>